<accession>F4JJH4</accession>
<accession>O81899</accession>
<organism evidence="11">
    <name type="scientific">Arabidopsis thaliana</name>
    <name type="common">Mouse-ear cress</name>
    <dbReference type="NCBI Taxonomy" id="3702"/>
    <lineage>
        <taxon>Eukaryota</taxon>
        <taxon>Viridiplantae</taxon>
        <taxon>Streptophyta</taxon>
        <taxon>Embryophyta</taxon>
        <taxon>Tracheophyta</taxon>
        <taxon>Spermatophyta</taxon>
        <taxon>Magnoliopsida</taxon>
        <taxon>eudicotyledons</taxon>
        <taxon>Gunneridae</taxon>
        <taxon>Pentapetalae</taxon>
        <taxon>rosids</taxon>
        <taxon>malvids</taxon>
        <taxon>Brassicales</taxon>
        <taxon>Brassicaceae</taxon>
        <taxon>Camelineae</taxon>
        <taxon>Arabidopsis</taxon>
    </lineage>
</organism>
<proteinExistence type="inferred from homology"/>
<keyword id="KW-0068">Autocatalytic cleavage</keyword>
<keyword id="KW-0325">Glycoprotein</keyword>
<keyword id="KW-0378">Hydrolase</keyword>
<keyword id="KW-0645">Protease</keyword>
<keyword id="KW-1185">Reference proteome</keyword>
<keyword id="KW-0964">Secreted</keyword>
<keyword id="KW-0720">Serine protease</keyword>
<keyword id="KW-0732">Signal</keyword>
<keyword id="KW-0865">Zymogen</keyword>
<name>SBT31_ARATH</name>
<feature type="signal peptide" evidence="3">
    <location>
        <begin position="1"/>
        <end position="32"/>
    </location>
</feature>
<feature type="propeptide" id="PRO_0000435188" description="Activation peptide" evidence="1">
    <location>
        <begin position="33"/>
        <end position="120"/>
    </location>
</feature>
<feature type="chain" id="PRO_0000435189" description="Subtilisin-like protease SBT3.1" evidence="3">
    <location>
        <begin position="121"/>
        <end status="unknown"/>
    </location>
</feature>
<feature type="propeptide" id="PRO_0000435190" evidence="1">
    <location>
        <begin status="unknown"/>
        <end position="764"/>
    </location>
</feature>
<feature type="domain" description="Inhibitor I9" evidence="3">
    <location>
        <begin position="41"/>
        <end position="116"/>
    </location>
</feature>
<feature type="domain" description="Peptidase S8" evidence="5">
    <location>
        <begin position="124"/>
        <end position="610"/>
    </location>
</feature>
<feature type="active site" description="Charge relay system" evidence="5">
    <location>
        <position position="156"/>
    </location>
</feature>
<feature type="active site" description="Charge relay system" evidence="5">
    <location>
        <position position="230"/>
    </location>
</feature>
<feature type="active site" description="Charge relay system" evidence="5">
    <location>
        <position position="541"/>
    </location>
</feature>
<feature type="glycosylation site" description="N-linked (GlcNAc...) asparagine" evidence="4">
    <location>
        <position position="76"/>
    </location>
</feature>
<feature type="glycosylation site" description="N-linked (GlcNAc...) asparagine" evidence="4">
    <location>
        <position position="216"/>
    </location>
</feature>
<feature type="glycosylation site" description="N-linked (GlcNAc...) asparagine" evidence="4">
    <location>
        <position position="245"/>
    </location>
</feature>
<feature type="glycosylation site" description="N-linked (GlcNAc...) asparagine" evidence="4">
    <location>
        <position position="374"/>
    </location>
</feature>
<feature type="glycosylation site" description="N-linked (GlcNAc...) asparagine" evidence="4">
    <location>
        <position position="674"/>
    </location>
</feature>
<feature type="glycosylation site" description="N-linked (GlcNAc...) asparagine" evidence="4">
    <location>
        <position position="711"/>
    </location>
</feature>
<feature type="glycosylation site" description="N-linked (GlcNAc...) asparagine" evidence="4">
    <location>
        <position position="747"/>
    </location>
</feature>
<dbReference type="EC" id="3.4.21.-" evidence="6"/>
<dbReference type="EMBL" id="AL031187">
    <property type="protein sequence ID" value="CAA20197.1"/>
    <property type="status" value="ALT_SEQ"/>
    <property type="molecule type" value="Genomic_DNA"/>
</dbReference>
<dbReference type="EMBL" id="AL161554">
    <property type="protein sequence ID" value="CAB79131.1"/>
    <property type="status" value="ALT_SEQ"/>
    <property type="molecule type" value="Genomic_DNA"/>
</dbReference>
<dbReference type="EMBL" id="CP002687">
    <property type="protein sequence ID" value="AEE84440.1"/>
    <property type="status" value="ALT_SEQ"/>
    <property type="molecule type" value="Genomic_DNA"/>
</dbReference>
<dbReference type="PIR" id="T05174">
    <property type="entry name" value="T05174"/>
</dbReference>
<dbReference type="RefSeq" id="NP_567624.1">
    <property type="nucleotide sequence ID" value="NM_118251.2"/>
</dbReference>
<dbReference type="SMR" id="F4JJH4"/>
<dbReference type="FunCoup" id="F4JJH4">
    <property type="interactions" value="1"/>
</dbReference>
<dbReference type="STRING" id="3702.F4JJH4"/>
<dbReference type="MEROPS" id="S08.A32"/>
<dbReference type="GlyCosmos" id="F4JJH4">
    <property type="glycosylation" value="7 sites, No reported glycans"/>
</dbReference>
<dbReference type="GlyGen" id="F4JJH4">
    <property type="glycosylation" value="7 sites"/>
</dbReference>
<dbReference type="PaxDb" id="3702-AT4G21323.1"/>
<dbReference type="ProteomicsDB" id="226593"/>
<dbReference type="GeneID" id="827881"/>
<dbReference type="KEGG" id="ath:AT4G21323"/>
<dbReference type="Araport" id="AT4G21323"/>
<dbReference type="TAIR" id="AT4G21323"/>
<dbReference type="eggNOG" id="ENOG502QSF0">
    <property type="taxonomic scope" value="Eukaryota"/>
</dbReference>
<dbReference type="HOGENOM" id="CLU_000625_4_2_1"/>
<dbReference type="InParanoid" id="F4JJH4"/>
<dbReference type="PRO" id="PR:F4JJH4"/>
<dbReference type="Proteomes" id="UP000006548">
    <property type="component" value="Chromosome 4"/>
</dbReference>
<dbReference type="ExpressionAtlas" id="F4JJH4">
    <property type="expression patterns" value="baseline and differential"/>
</dbReference>
<dbReference type="GO" id="GO:0005615">
    <property type="term" value="C:extracellular space"/>
    <property type="evidence" value="ECO:0000318"/>
    <property type="project" value="GO_Central"/>
</dbReference>
<dbReference type="GO" id="GO:0004252">
    <property type="term" value="F:serine-type endopeptidase activity"/>
    <property type="evidence" value="ECO:0000318"/>
    <property type="project" value="GO_Central"/>
</dbReference>
<dbReference type="GO" id="GO:0009860">
    <property type="term" value="P:pollen tube growth"/>
    <property type="evidence" value="ECO:0000270"/>
    <property type="project" value="TAIR"/>
</dbReference>
<dbReference type="GO" id="GO:0006508">
    <property type="term" value="P:proteolysis"/>
    <property type="evidence" value="ECO:0007669"/>
    <property type="project" value="UniProtKB-KW"/>
</dbReference>
<dbReference type="CDD" id="cd02120">
    <property type="entry name" value="PA_subtilisin_like"/>
    <property type="match status" value="1"/>
</dbReference>
<dbReference type="CDD" id="cd04852">
    <property type="entry name" value="Peptidases_S8_3"/>
    <property type="match status" value="1"/>
</dbReference>
<dbReference type="FunFam" id="2.60.40.2310:FF:000001">
    <property type="entry name" value="Subtilisin-like protease SBT1.5"/>
    <property type="match status" value="1"/>
</dbReference>
<dbReference type="FunFam" id="3.40.50.200:FF:000006">
    <property type="entry name" value="Subtilisin-like protease SBT1.5"/>
    <property type="match status" value="1"/>
</dbReference>
<dbReference type="FunFam" id="3.30.70.80:FF:000002">
    <property type="entry name" value="Subtilisin-like protease SBT5.3"/>
    <property type="match status" value="1"/>
</dbReference>
<dbReference type="Gene3D" id="2.60.40.2310">
    <property type="match status" value="1"/>
</dbReference>
<dbReference type="Gene3D" id="3.50.30.30">
    <property type="match status" value="1"/>
</dbReference>
<dbReference type="Gene3D" id="3.30.70.80">
    <property type="entry name" value="Peptidase S8 propeptide/proteinase inhibitor I9"/>
    <property type="match status" value="1"/>
</dbReference>
<dbReference type="Gene3D" id="3.40.50.200">
    <property type="entry name" value="Peptidase S8/S53 domain"/>
    <property type="match status" value="1"/>
</dbReference>
<dbReference type="InterPro" id="IPR000209">
    <property type="entry name" value="Peptidase_S8/S53_dom"/>
</dbReference>
<dbReference type="InterPro" id="IPR036852">
    <property type="entry name" value="Peptidase_S8/S53_dom_sf"/>
</dbReference>
<dbReference type="InterPro" id="IPR022398">
    <property type="entry name" value="Peptidase_S8_His-AS"/>
</dbReference>
<dbReference type="InterPro" id="IPR023828">
    <property type="entry name" value="Peptidase_S8_Ser-AS"/>
</dbReference>
<dbReference type="InterPro" id="IPR015500">
    <property type="entry name" value="Peptidase_S8_subtilisin-rel"/>
</dbReference>
<dbReference type="InterPro" id="IPR034197">
    <property type="entry name" value="Peptidases_S8_3"/>
</dbReference>
<dbReference type="InterPro" id="IPR010259">
    <property type="entry name" value="S8pro/Inhibitor_I9"/>
</dbReference>
<dbReference type="InterPro" id="IPR037045">
    <property type="entry name" value="S8pro/Inhibitor_I9_sf"/>
</dbReference>
<dbReference type="InterPro" id="IPR045051">
    <property type="entry name" value="SBT"/>
</dbReference>
<dbReference type="InterPro" id="IPR041469">
    <property type="entry name" value="Subtilisin-like_FN3"/>
</dbReference>
<dbReference type="PANTHER" id="PTHR10795">
    <property type="entry name" value="PROPROTEIN CONVERTASE SUBTILISIN/KEXIN"/>
    <property type="match status" value="1"/>
</dbReference>
<dbReference type="Pfam" id="PF17766">
    <property type="entry name" value="fn3_6"/>
    <property type="match status" value="1"/>
</dbReference>
<dbReference type="Pfam" id="PF05922">
    <property type="entry name" value="Inhibitor_I9"/>
    <property type="match status" value="1"/>
</dbReference>
<dbReference type="Pfam" id="PF00082">
    <property type="entry name" value="Peptidase_S8"/>
    <property type="match status" value="1"/>
</dbReference>
<dbReference type="PRINTS" id="PR00723">
    <property type="entry name" value="SUBTILISIN"/>
</dbReference>
<dbReference type="SUPFAM" id="SSF52743">
    <property type="entry name" value="Subtilisin-like"/>
    <property type="match status" value="1"/>
</dbReference>
<dbReference type="PROSITE" id="PS51892">
    <property type="entry name" value="SUBTILASE"/>
    <property type="match status" value="1"/>
</dbReference>
<dbReference type="PROSITE" id="PS00137">
    <property type="entry name" value="SUBTILASE_HIS"/>
    <property type="match status" value="1"/>
</dbReference>
<dbReference type="PROSITE" id="PS00138">
    <property type="entry name" value="SUBTILASE_SER"/>
    <property type="match status" value="1"/>
</dbReference>
<reference key="1">
    <citation type="journal article" date="1999" name="Nature">
        <title>Sequence and analysis of chromosome 4 of the plant Arabidopsis thaliana.</title>
        <authorList>
            <person name="Mayer K.F.X."/>
            <person name="Schueller C."/>
            <person name="Wambutt R."/>
            <person name="Murphy G."/>
            <person name="Volckaert G."/>
            <person name="Pohl T."/>
            <person name="Duesterhoeft A."/>
            <person name="Stiekema W."/>
            <person name="Entian K.-D."/>
            <person name="Terryn N."/>
            <person name="Harris B."/>
            <person name="Ansorge W."/>
            <person name="Brandt P."/>
            <person name="Grivell L.A."/>
            <person name="Rieger M."/>
            <person name="Weichselgartner M."/>
            <person name="de Simone V."/>
            <person name="Obermaier B."/>
            <person name="Mache R."/>
            <person name="Mueller M."/>
            <person name="Kreis M."/>
            <person name="Delseny M."/>
            <person name="Puigdomenech P."/>
            <person name="Watson M."/>
            <person name="Schmidtheini T."/>
            <person name="Reichert B."/>
            <person name="Portetelle D."/>
            <person name="Perez-Alonso M."/>
            <person name="Boutry M."/>
            <person name="Bancroft I."/>
            <person name="Vos P."/>
            <person name="Hoheisel J."/>
            <person name="Zimmermann W."/>
            <person name="Wedler H."/>
            <person name="Ridley P."/>
            <person name="Langham S.-A."/>
            <person name="McCullagh B."/>
            <person name="Bilham L."/>
            <person name="Robben J."/>
            <person name="van der Schueren J."/>
            <person name="Grymonprez B."/>
            <person name="Chuang Y.-J."/>
            <person name="Vandenbussche F."/>
            <person name="Braeken M."/>
            <person name="Weltjens I."/>
            <person name="Voet M."/>
            <person name="Bastiaens I."/>
            <person name="Aert R."/>
            <person name="Defoor E."/>
            <person name="Weitzenegger T."/>
            <person name="Bothe G."/>
            <person name="Ramsperger U."/>
            <person name="Hilbert H."/>
            <person name="Braun M."/>
            <person name="Holzer E."/>
            <person name="Brandt A."/>
            <person name="Peters S."/>
            <person name="van Staveren M."/>
            <person name="Dirkse W."/>
            <person name="Mooijman P."/>
            <person name="Klein Lankhorst R."/>
            <person name="Rose M."/>
            <person name="Hauf J."/>
            <person name="Koetter P."/>
            <person name="Berneiser S."/>
            <person name="Hempel S."/>
            <person name="Feldpausch M."/>
            <person name="Lamberth S."/>
            <person name="Van den Daele H."/>
            <person name="De Keyser A."/>
            <person name="Buysshaert C."/>
            <person name="Gielen J."/>
            <person name="Villarroel R."/>
            <person name="De Clercq R."/>
            <person name="van Montagu M."/>
            <person name="Rogers J."/>
            <person name="Cronin A."/>
            <person name="Quail M.A."/>
            <person name="Bray-Allen S."/>
            <person name="Clark L."/>
            <person name="Doggett J."/>
            <person name="Hall S."/>
            <person name="Kay M."/>
            <person name="Lennard N."/>
            <person name="McLay K."/>
            <person name="Mayes R."/>
            <person name="Pettett A."/>
            <person name="Rajandream M.A."/>
            <person name="Lyne M."/>
            <person name="Benes V."/>
            <person name="Rechmann S."/>
            <person name="Borkova D."/>
            <person name="Bloecker H."/>
            <person name="Scharfe M."/>
            <person name="Grimm M."/>
            <person name="Loehnert T.-H."/>
            <person name="Dose S."/>
            <person name="de Haan M."/>
            <person name="Maarse A.C."/>
            <person name="Schaefer M."/>
            <person name="Mueller-Auer S."/>
            <person name="Gabel C."/>
            <person name="Fuchs M."/>
            <person name="Fartmann B."/>
            <person name="Granderath K."/>
            <person name="Dauner D."/>
            <person name="Herzl A."/>
            <person name="Neumann S."/>
            <person name="Argiriou A."/>
            <person name="Vitale D."/>
            <person name="Liguori R."/>
            <person name="Piravandi E."/>
            <person name="Massenet O."/>
            <person name="Quigley F."/>
            <person name="Clabauld G."/>
            <person name="Muendlein A."/>
            <person name="Felber R."/>
            <person name="Schnabl S."/>
            <person name="Hiller R."/>
            <person name="Schmidt W."/>
            <person name="Lecharny A."/>
            <person name="Aubourg S."/>
            <person name="Chefdor F."/>
            <person name="Cooke R."/>
            <person name="Berger C."/>
            <person name="Monfort A."/>
            <person name="Casacuberta E."/>
            <person name="Gibbons T."/>
            <person name="Weber N."/>
            <person name="Vandenbol M."/>
            <person name="Bargues M."/>
            <person name="Terol J."/>
            <person name="Torres A."/>
            <person name="Perez-Perez A."/>
            <person name="Purnelle B."/>
            <person name="Bent E."/>
            <person name="Johnson S."/>
            <person name="Tacon D."/>
            <person name="Jesse T."/>
            <person name="Heijnen L."/>
            <person name="Schwarz S."/>
            <person name="Scholler P."/>
            <person name="Heber S."/>
            <person name="Francs P."/>
            <person name="Bielke C."/>
            <person name="Frishman D."/>
            <person name="Haase D."/>
            <person name="Lemcke K."/>
            <person name="Mewes H.-W."/>
            <person name="Stocker S."/>
            <person name="Zaccaria P."/>
            <person name="Bevan M."/>
            <person name="Wilson R.K."/>
            <person name="de la Bastide M."/>
            <person name="Habermann K."/>
            <person name="Parnell L."/>
            <person name="Dedhia N."/>
            <person name="Gnoj L."/>
            <person name="Schutz K."/>
            <person name="Huang E."/>
            <person name="Spiegel L."/>
            <person name="Sekhon M."/>
            <person name="Murray J."/>
            <person name="Sheet P."/>
            <person name="Cordes M."/>
            <person name="Abu-Threideh J."/>
            <person name="Stoneking T."/>
            <person name="Kalicki J."/>
            <person name="Graves T."/>
            <person name="Harmon G."/>
            <person name="Edwards J."/>
            <person name="Latreille P."/>
            <person name="Courtney L."/>
            <person name="Cloud J."/>
            <person name="Abbott A."/>
            <person name="Scott K."/>
            <person name="Johnson D."/>
            <person name="Minx P."/>
            <person name="Bentley D."/>
            <person name="Fulton B."/>
            <person name="Miller N."/>
            <person name="Greco T."/>
            <person name="Kemp K."/>
            <person name="Kramer J."/>
            <person name="Fulton L."/>
            <person name="Mardis E."/>
            <person name="Dante M."/>
            <person name="Pepin K."/>
            <person name="Hillier L.W."/>
            <person name="Nelson J."/>
            <person name="Spieth J."/>
            <person name="Ryan E."/>
            <person name="Andrews S."/>
            <person name="Geisel C."/>
            <person name="Layman D."/>
            <person name="Du H."/>
            <person name="Ali J."/>
            <person name="Berghoff A."/>
            <person name="Jones K."/>
            <person name="Drone K."/>
            <person name="Cotton M."/>
            <person name="Joshu C."/>
            <person name="Antonoiu B."/>
            <person name="Zidanic M."/>
            <person name="Strong C."/>
            <person name="Sun H."/>
            <person name="Lamar B."/>
            <person name="Yordan C."/>
            <person name="Ma P."/>
            <person name="Zhong J."/>
            <person name="Preston R."/>
            <person name="Vil D."/>
            <person name="Shekher M."/>
            <person name="Matero A."/>
            <person name="Shah R."/>
            <person name="Swaby I.K."/>
            <person name="O'Shaughnessy A."/>
            <person name="Rodriguez M."/>
            <person name="Hoffman J."/>
            <person name="Till S."/>
            <person name="Granat S."/>
            <person name="Shohdy N."/>
            <person name="Hasegawa A."/>
            <person name="Hameed A."/>
            <person name="Lodhi M."/>
            <person name="Johnson A."/>
            <person name="Chen E."/>
            <person name="Marra M.A."/>
            <person name="Martienssen R."/>
            <person name="McCombie W.R."/>
        </authorList>
    </citation>
    <scope>NUCLEOTIDE SEQUENCE [LARGE SCALE GENOMIC DNA]</scope>
    <source>
        <strain>cv. Columbia</strain>
    </source>
</reference>
<reference key="2">
    <citation type="journal article" date="2017" name="Plant J.">
        <title>Araport11: a complete reannotation of the Arabidopsis thaliana reference genome.</title>
        <authorList>
            <person name="Cheng C.Y."/>
            <person name="Krishnakumar V."/>
            <person name="Chan A.P."/>
            <person name="Thibaud-Nissen F."/>
            <person name="Schobel S."/>
            <person name="Town C.D."/>
        </authorList>
    </citation>
    <scope>GENOME REANNOTATION</scope>
    <source>
        <strain>cv. Columbia</strain>
    </source>
</reference>
<reference key="3">
    <citation type="journal article" date="2005" name="PLoS Comput. Biol.">
        <title>Inferring hypotheses on functional relationships of genes: Analysis of the Arabidopsis thaliana subtilase gene family.</title>
        <authorList>
            <person name="Rautengarten C."/>
            <person name="Steinhauser D."/>
            <person name="Bussis D."/>
            <person name="Stintzi A."/>
            <person name="Schaller A."/>
            <person name="Kopka J."/>
            <person name="Altmann T."/>
        </authorList>
    </citation>
    <scope>GENE FAMILY</scope>
    <scope>NOMENCLATURE</scope>
</reference>
<comment type="subcellular location">
    <subcellularLocation>
        <location evidence="2">Secreted</location>
    </subcellularLocation>
</comment>
<comment type="similarity">
    <text evidence="8">Belongs to the peptidase S8 family.</text>
</comment>
<comment type="sequence caution" evidence="8">
    <conflict type="erroneous gene model prediction">
        <sequence resource="EMBL-CDS" id="AEE84440"/>
    </conflict>
</comment>
<comment type="sequence caution" evidence="8">
    <conflict type="erroneous gene model prediction">
        <sequence resource="EMBL-CDS" id="CAA20197"/>
    </conflict>
    <text>The predicted gene At4g21320 has been split into 3 genes: At4g21320, At4g21323 and At4g21326.</text>
</comment>
<comment type="sequence caution" evidence="8">
    <conflict type="erroneous gene model prediction">
        <sequence resource="EMBL-CDS" id="CAB79131"/>
    </conflict>
    <text>The predicted gene At4g21320 has been split into 3 genes: At4g21320, At4g21323 and At4g21326.</text>
</comment>
<evidence type="ECO:0000250" key="1">
    <source>
        <dbReference type="UniProtKB" id="Q39547"/>
    </source>
</evidence>
<evidence type="ECO:0000250" key="2">
    <source>
        <dbReference type="UniProtKB" id="Q84WS0"/>
    </source>
</evidence>
<evidence type="ECO:0000255" key="3"/>
<evidence type="ECO:0000255" key="4">
    <source>
        <dbReference type="PROSITE-ProRule" id="PRU00498"/>
    </source>
</evidence>
<evidence type="ECO:0000255" key="5">
    <source>
        <dbReference type="PROSITE-ProRule" id="PRU01240"/>
    </source>
</evidence>
<evidence type="ECO:0000255" key="6">
    <source>
        <dbReference type="PROSITE-ProRule" id="PRU10082"/>
    </source>
</evidence>
<evidence type="ECO:0000303" key="7">
    <source>
    </source>
</evidence>
<evidence type="ECO:0000305" key="8"/>
<evidence type="ECO:0000312" key="9">
    <source>
        <dbReference type="Araport" id="AT4G21323"/>
    </source>
</evidence>
<evidence type="ECO:0000312" key="10">
    <source>
        <dbReference type="EMBL" id="CAA20197.1"/>
    </source>
</evidence>
<evidence type="ECO:0000312" key="11">
    <source>
        <dbReference type="Proteomes" id="UP000006548"/>
    </source>
</evidence>
<gene>
    <name evidence="7" type="primary">SBT3.1</name>
    <name evidence="9" type="ordered locus">At4g21323</name>
    <name evidence="10" type="ORF">T6K22.50</name>
</gene>
<sequence length="764" mass="82638">MIQTLKTDSSFRLCFAAIAFGFVFIMNGKLSSGTTPHEFPVYIFYLGERKHDDPNLVTQSHLEILKSVLGSEEATNKSMVYSYHHGFSGFAAKLKPAEAEKLKKHPEVIILLENRKLGLQTTRTWDYLGQFSTPTSSKSLLHETNMGSGAIIGVIDSGIWSESGSFDDDGYGPIPKHWKGQCVSADQFSPADCNKKLIGAKYYIDGLNADLETSINSTTEYLSPRDHNGHGTQVSSTAAGSFVSNMTLLGLSSGSIMRGGAPKAHIAMYKACWDVEGGMCSVADVWKAFDEAIHDGVDVLSVSVGGSALKTLDVEIDIAIPALHAVNKGIPVVSPAGNEGSRSSSVINVSPWILTVAATTLDRSFSTLITLENNKTYLGQSLYTGPEISFTDVICTGDHSNVDQITKGKVIMHFSMGPVRPLTPDVVQKNGGIGLIYVRNPGDSRVECPVNFPCIYLDMEVGSELYTYIQTRSSMKIKISPYKTIIGESVASKVAKSSARGPSSFSPAILKPDIAAPGLTLLTPRIPTDEDTREFVYSGTSMATPVIAGIVALLKISHPNWSPAVIKSALVTTAMKTDPYGERLTVDGGNYKVADAFDYGGGLVNLEKATDPGLVYDMDINDYTHYLCSQTLYTDKKVSALTGNVNNKCPSSSSSILDLNVPSITIPDLKGTVNVTRTVTNVGRVKSVYKPVIEAPFGFNVVVSPKKLKFNKTRNKLAFTVTVSPGSHRVNTAFYFGSLTWSDKVHNVTIPISLRTRFIDNFFL</sequence>
<protein>
    <recommendedName>
        <fullName evidence="7">Subtilisin-like protease SBT3.1</fullName>
        <ecNumber evidence="6">3.4.21.-</ecNumber>
    </recommendedName>
    <alternativeName>
        <fullName evidence="7">Subtilase subfamily 3 member 1</fullName>
        <shortName evidence="7">AtSBT3.1</shortName>
    </alternativeName>
</protein>